<comment type="function">
    <text evidence="3">Essential component of the cytosolic iron-sulfur (Fe-S) protein assembly (CIA) machinery. Required for the maturation of extramitochondrial Fe/S proteins.</text>
</comment>
<comment type="subunit">
    <text evidence="3">Part of a complex composed of AE7, CIA1, MMS19 and NAR1. Interacts with AE7 and NAR1.</text>
</comment>
<comment type="subcellular location">
    <subcellularLocation>
        <location evidence="3">Nucleus</location>
    </subcellularLocation>
    <subcellularLocation>
        <location evidence="3">Cytoplasm</location>
    </subcellularLocation>
</comment>
<comment type="alternative products">
    <event type="alternative splicing"/>
    <isoform>
        <id>O80990-1</id>
        <name>1</name>
        <sequence type="displayed"/>
    </isoform>
    <isoform>
        <id>O80990-2</id>
        <name>2</name>
        <sequence type="described" ref="VSP_057803 VSP_057804"/>
    </isoform>
</comment>
<comment type="disruption phenotype">
    <text evidence="2 3">Embryonic lethality when homozygous.</text>
</comment>
<comment type="similarity">
    <text evidence="6">Belongs to the WD repeat CIA1 family.</text>
</comment>
<protein>
    <recommendedName>
        <fullName evidence="5">Protein CIA1</fullName>
    </recommendedName>
    <alternativeName>
        <fullName evidence="5">Cytosolic iron-sulfur protein assembly 1</fullName>
    </alternativeName>
    <alternativeName>
        <fullName evidence="4">Protein EMBRYO DEFECTIVE 1345</fullName>
    </alternativeName>
</protein>
<feature type="chain" id="PRO_0000433517" description="Protein CIA1">
    <location>
        <begin position="1"/>
        <end position="352"/>
    </location>
</feature>
<feature type="repeat" description="WD 1" evidence="1">
    <location>
        <begin position="18"/>
        <end position="64"/>
    </location>
</feature>
<feature type="repeat" description="WD 2" evidence="1">
    <location>
        <begin position="72"/>
        <end position="111"/>
    </location>
</feature>
<feature type="repeat" description="WD 3" evidence="1">
    <location>
        <begin position="116"/>
        <end position="155"/>
    </location>
</feature>
<feature type="repeat" description="WD 4" evidence="1">
    <location>
        <begin position="161"/>
        <end position="200"/>
    </location>
</feature>
<feature type="repeat" description="WD 5" evidence="1">
    <location>
        <begin position="211"/>
        <end position="250"/>
    </location>
</feature>
<feature type="repeat" description="WD 6" evidence="1">
    <location>
        <begin position="265"/>
        <end position="303"/>
    </location>
</feature>
<feature type="repeat" description="WD 7" evidence="1">
    <location>
        <begin position="315"/>
        <end position="352"/>
    </location>
</feature>
<feature type="splice variant" id="VSP_057803" description="In isoform 2.">
    <original>EGNRLLASA</original>
    <variation>VREPVACVG</variation>
    <location>
        <begin position="329"/>
        <end position="337"/>
    </location>
</feature>
<feature type="splice variant" id="VSP_057804" description="In isoform 2.">
    <location>
        <begin position="338"/>
        <end position="352"/>
    </location>
</feature>
<name>CIA1_ARATH</name>
<organism evidence="9">
    <name type="scientific">Arabidopsis thaliana</name>
    <name type="common">Mouse-ear cress</name>
    <dbReference type="NCBI Taxonomy" id="3702"/>
    <lineage>
        <taxon>Eukaryota</taxon>
        <taxon>Viridiplantae</taxon>
        <taxon>Streptophyta</taxon>
        <taxon>Embryophyta</taxon>
        <taxon>Tracheophyta</taxon>
        <taxon>Spermatophyta</taxon>
        <taxon>Magnoliopsida</taxon>
        <taxon>eudicotyledons</taxon>
        <taxon>Gunneridae</taxon>
        <taxon>Pentapetalae</taxon>
        <taxon>rosids</taxon>
        <taxon>malvids</taxon>
        <taxon>Brassicales</taxon>
        <taxon>Brassicaceae</taxon>
        <taxon>Camelineae</taxon>
        <taxon>Arabidopsis</taxon>
    </lineage>
</organism>
<accession>O80990</accession>
<accession>F4ITL5</accession>
<reference key="1">
    <citation type="journal article" date="1999" name="Nature">
        <title>Sequence and analysis of chromosome 2 of the plant Arabidopsis thaliana.</title>
        <authorList>
            <person name="Lin X."/>
            <person name="Kaul S."/>
            <person name="Rounsley S.D."/>
            <person name="Shea T.P."/>
            <person name="Benito M.-I."/>
            <person name="Town C.D."/>
            <person name="Fujii C.Y."/>
            <person name="Mason T.M."/>
            <person name="Bowman C.L."/>
            <person name="Barnstead M.E."/>
            <person name="Feldblyum T.V."/>
            <person name="Buell C.R."/>
            <person name="Ketchum K.A."/>
            <person name="Lee J.J."/>
            <person name="Ronning C.M."/>
            <person name="Koo H.L."/>
            <person name="Moffat K.S."/>
            <person name="Cronin L.A."/>
            <person name="Shen M."/>
            <person name="Pai G."/>
            <person name="Van Aken S."/>
            <person name="Umayam L."/>
            <person name="Tallon L.J."/>
            <person name="Gill J.E."/>
            <person name="Adams M.D."/>
            <person name="Carrera A.J."/>
            <person name="Creasy T.H."/>
            <person name="Goodman H.M."/>
            <person name="Somerville C.R."/>
            <person name="Copenhaver G.P."/>
            <person name="Preuss D."/>
            <person name="Nierman W.C."/>
            <person name="White O."/>
            <person name="Eisen J.A."/>
            <person name="Salzberg S.L."/>
            <person name="Fraser C.M."/>
            <person name="Venter J.C."/>
        </authorList>
    </citation>
    <scope>NUCLEOTIDE SEQUENCE [LARGE SCALE GENOMIC DNA]</scope>
    <source>
        <strain>cv. Columbia</strain>
    </source>
</reference>
<reference key="2">
    <citation type="journal article" date="2017" name="Plant J.">
        <title>Araport11: a complete reannotation of the Arabidopsis thaliana reference genome.</title>
        <authorList>
            <person name="Cheng C.Y."/>
            <person name="Krishnakumar V."/>
            <person name="Chan A.P."/>
            <person name="Thibaud-Nissen F."/>
            <person name="Schobel S."/>
            <person name="Town C.D."/>
        </authorList>
    </citation>
    <scope>GENOME REANNOTATION</scope>
    <source>
        <strain>cv. Columbia</strain>
    </source>
</reference>
<reference key="3">
    <citation type="journal article" date="2003" name="Science">
        <title>Empirical analysis of transcriptional activity in the Arabidopsis genome.</title>
        <authorList>
            <person name="Yamada K."/>
            <person name="Lim J."/>
            <person name="Dale J.M."/>
            <person name="Chen H."/>
            <person name="Shinn P."/>
            <person name="Palm C.J."/>
            <person name="Southwick A.M."/>
            <person name="Wu H.C."/>
            <person name="Kim C.J."/>
            <person name="Nguyen M."/>
            <person name="Pham P.K."/>
            <person name="Cheuk R.F."/>
            <person name="Karlin-Newmann G."/>
            <person name="Liu S.X."/>
            <person name="Lam B."/>
            <person name="Sakano H."/>
            <person name="Wu T."/>
            <person name="Yu G."/>
            <person name="Miranda M."/>
            <person name="Quach H.L."/>
            <person name="Tripp M."/>
            <person name="Chang C.H."/>
            <person name="Lee J.M."/>
            <person name="Toriumi M.J."/>
            <person name="Chan M.M."/>
            <person name="Tang C.C."/>
            <person name="Onodera C.S."/>
            <person name="Deng J.M."/>
            <person name="Akiyama K."/>
            <person name="Ansari Y."/>
            <person name="Arakawa T."/>
            <person name="Banh J."/>
            <person name="Banno F."/>
            <person name="Bowser L."/>
            <person name="Brooks S.Y."/>
            <person name="Carninci P."/>
            <person name="Chao Q."/>
            <person name="Choy N."/>
            <person name="Enju A."/>
            <person name="Goldsmith A.D."/>
            <person name="Gurjal M."/>
            <person name="Hansen N.F."/>
            <person name="Hayashizaki Y."/>
            <person name="Johnson-Hopson C."/>
            <person name="Hsuan V.W."/>
            <person name="Iida K."/>
            <person name="Karnes M."/>
            <person name="Khan S."/>
            <person name="Koesema E."/>
            <person name="Ishida J."/>
            <person name="Jiang P.X."/>
            <person name="Jones T."/>
            <person name="Kawai J."/>
            <person name="Kamiya A."/>
            <person name="Meyers C."/>
            <person name="Nakajima M."/>
            <person name="Narusaka M."/>
            <person name="Seki M."/>
            <person name="Sakurai T."/>
            <person name="Satou M."/>
            <person name="Tamse R."/>
            <person name="Vaysberg M."/>
            <person name="Wallender E.K."/>
            <person name="Wong C."/>
            <person name="Yamamura Y."/>
            <person name="Yuan S."/>
            <person name="Shinozaki K."/>
            <person name="Davis R.W."/>
            <person name="Theologis A."/>
            <person name="Ecker J.R."/>
        </authorList>
    </citation>
    <scope>NUCLEOTIDE SEQUENCE [LARGE SCALE MRNA] (ISOFORM 1)</scope>
    <source>
        <strain>cv. Columbia</strain>
    </source>
</reference>
<reference key="4">
    <citation type="submission" date="2002-03" db="EMBL/GenBank/DDBJ databases">
        <title>Full-length cDNA from Arabidopsis thaliana.</title>
        <authorList>
            <person name="Brover V.V."/>
            <person name="Troukhan M.E."/>
            <person name="Alexandrov N.A."/>
            <person name="Lu Y.-P."/>
            <person name="Flavell R.B."/>
            <person name="Feldmann K.A."/>
        </authorList>
    </citation>
    <scope>NUCLEOTIDE SEQUENCE [LARGE SCALE MRNA] (ISOFORM 1)</scope>
</reference>
<reference key="5">
    <citation type="journal article" date="2004" name="Plant Physiol.">
        <title>Identification of genes required for embryo development in Arabidopsis.</title>
        <authorList>
            <person name="Tzafrir I."/>
            <person name="Pena-Muralla R."/>
            <person name="Dickerman A."/>
            <person name="Berg M."/>
            <person name="Rogers R."/>
            <person name="Hutchens S."/>
            <person name="Sweeney T.C."/>
            <person name="McElver J."/>
            <person name="Aux G."/>
            <person name="Patton D."/>
            <person name="Meinke D."/>
        </authorList>
    </citation>
    <scope>DISRUPTION PHENOTYPE</scope>
</reference>
<reference key="6">
    <citation type="journal article" date="2008" name="Genetics">
        <title>Genome analysis of Chlamydomonas reinhardtii reveals the existence of multiple, compartmentalized iron-sulfur protein assembly machineries of different evolutionary origins.</title>
        <authorList>
            <person name="Godman J."/>
            <person name="Balk J."/>
        </authorList>
    </citation>
    <scope>IDENTIFICATION</scope>
    <scope>REVIEW</scope>
</reference>
<reference key="7">
    <citation type="journal article" date="2012" name="Plant Cell">
        <title>The DUF59 family gene AE7 acts in the cytosolic iron-sulfur cluster assembly pathway to maintain nuclear genome integrity in Arabidopsis.</title>
        <authorList>
            <person name="Luo D."/>
            <person name="Bernard D.G."/>
            <person name="Balk J."/>
            <person name="Hai H."/>
            <person name="Cui X."/>
        </authorList>
    </citation>
    <scope>FUNCTION</scope>
    <scope>INTERACTION WITH AE7 AND NAR1</scope>
    <scope>SUBCELLULAR LOCATION</scope>
    <scope>DISRUPTION PHENOTYPE</scope>
    <source>
        <strain>cv. Columbia</strain>
    </source>
</reference>
<gene>
    <name evidence="5" type="primary">CIA1</name>
    <name evidence="4" type="synonym">EMB1345</name>
    <name evidence="7" type="ordered locus">At2g26060</name>
    <name evidence="8" type="ORF">T19L18.13</name>
</gene>
<sequence>MDLMEKNLELVEIQKLEGHTDRVWSVAWNPVSSHADGVSPILASCSGDNTVRIWEQSSLSRSWTCKTVLEETHTRTVRSCAWSPSGQLLATASFDGTTGIWKNYGSEFECISTLEGHENEVKSVSWNASGSCLATCSRDKSVWIWEVLEGNEYDCAAVLTGHTQDVKMVQWHPTMDVLFSCSYDNTIKVWWSEDDDGEYQCVQTLGESNNGHSSTVWSISFNAAGDKMVTCSDDLTLKIWGTDIAKMQSGEEYAPWIHLCTLSGYHDRTIYSAHWSRDDIIASGAGDNAIRLFVDSKHDSVDGPSYNLLLKKNKAHENDVNSVQWSPGEGNRLLASASDDGMVKIWQLATKP</sequence>
<dbReference type="EMBL" id="AC004747">
    <property type="protein sequence ID" value="AAC31230.2"/>
    <property type="molecule type" value="Genomic_DNA"/>
</dbReference>
<dbReference type="EMBL" id="CP002685">
    <property type="protein sequence ID" value="AEC07790.1"/>
    <property type="molecule type" value="Genomic_DNA"/>
</dbReference>
<dbReference type="EMBL" id="CP002685">
    <property type="protein sequence ID" value="AEC07791.1"/>
    <property type="molecule type" value="Genomic_DNA"/>
</dbReference>
<dbReference type="EMBL" id="AY093154">
    <property type="protein sequence ID" value="AAM13153.1"/>
    <property type="molecule type" value="mRNA"/>
</dbReference>
<dbReference type="EMBL" id="BT003394">
    <property type="protein sequence ID" value="AAO30057.1"/>
    <property type="molecule type" value="mRNA"/>
</dbReference>
<dbReference type="EMBL" id="AY085277">
    <property type="protein sequence ID" value="AAM62509.1"/>
    <property type="molecule type" value="mRNA"/>
</dbReference>
<dbReference type="PIR" id="T02617">
    <property type="entry name" value="T02617"/>
</dbReference>
<dbReference type="RefSeq" id="NP_001031421.1">
    <molecule id="O80990-2"/>
    <property type="nucleotide sequence ID" value="NM_001036344.1"/>
</dbReference>
<dbReference type="RefSeq" id="NP_565615.1">
    <molecule id="O80990-1"/>
    <property type="nucleotide sequence ID" value="NM_128165.4"/>
</dbReference>
<dbReference type="SMR" id="O80990"/>
<dbReference type="FunCoup" id="O80990">
    <property type="interactions" value="4166"/>
</dbReference>
<dbReference type="STRING" id="3702.O80990"/>
<dbReference type="PaxDb" id="3702-AT2G26060.1"/>
<dbReference type="ProteomicsDB" id="246892">
    <molecule id="O80990-1"/>
</dbReference>
<dbReference type="EnsemblPlants" id="AT2G26060.1">
    <molecule id="O80990-1"/>
    <property type="protein sequence ID" value="AT2G26060.1"/>
    <property type="gene ID" value="AT2G26060"/>
</dbReference>
<dbReference type="EnsemblPlants" id="AT2G26060.2">
    <molecule id="O80990-2"/>
    <property type="protein sequence ID" value="AT2G26060.2"/>
    <property type="gene ID" value="AT2G26060"/>
</dbReference>
<dbReference type="GeneID" id="817147"/>
<dbReference type="Gramene" id="AT2G26060.1">
    <molecule id="O80990-1"/>
    <property type="protein sequence ID" value="AT2G26060.1"/>
    <property type="gene ID" value="AT2G26060"/>
</dbReference>
<dbReference type="Gramene" id="AT2G26060.2">
    <molecule id="O80990-2"/>
    <property type="protein sequence ID" value="AT2G26060.2"/>
    <property type="gene ID" value="AT2G26060"/>
</dbReference>
<dbReference type="KEGG" id="ath:AT2G26060"/>
<dbReference type="Araport" id="AT2G26060"/>
<dbReference type="TAIR" id="AT2G26060">
    <property type="gene designation" value="EMB1345"/>
</dbReference>
<dbReference type="eggNOG" id="KOG0645">
    <property type="taxonomic scope" value="Eukaryota"/>
</dbReference>
<dbReference type="HOGENOM" id="CLU_000288_57_8_1"/>
<dbReference type="InParanoid" id="O80990"/>
<dbReference type="OMA" id="IREIRWS"/>
<dbReference type="PhylomeDB" id="O80990"/>
<dbReference type="PRO" id="PR:O80990"/>
<dbReference type="Proteomes" id="UP000006548">
    <property type="component" value="Chromosome 2"/>
</dbReference>
<dbReference type="ExpressionAtlas" id="O80990">
    <property type="expression patterns" value="baseline and differential"/>
</dbReference>
<dbReference type="GO" id="GO:0097361">
    <property type="term" value="C:cytosolic [4Fe-4S] assembly targeting complex"/>
    <property type="evidence" value="ECO:0007669"/>
    <property type="project" value="InterPro"/>
</dbReference>
<dbReference type="GO" id="GO:0005634">
    <property type="term" value="C:nucleus"/>
    <property type="evidence" value="ECO:0007669"/>
    <property type="project" value="UniProtKB-SubCell"/>
</dbReference>
<dbReference type="GO" id="GO:0016226">
    <property type="term" value="P:iron-sulfur cluster assembly"/>
    <property type="evidence" value="ECO:0000316"/>
    <property type="project" value="TAIR"/>
</dbReference>
<dbReference type="CDD" id="cd00200">
    <property type="entry name" value="WD40"/>
    <property type="match status" value="1"/>
</dbReference>
<dbReference type="FunFam" id="2.130.10.10:FF:000136">
    <property type="entry name" value="Probable cytosolic iron-sulfur protein assembly protein CIAO1"/>
    <property type="match status" value="1"/>
</dbReference>
<dbReference type="Gene3D" id="2.130.10.10">
    <property type="entry name" value="YVTN repeat-like/Quinoprotein amine dehydrogenase"/>
    <property type="match status" value="1"/>
</dbReference>
<dbReference type="HAMAP" id="MF_03037">
    <property type="entry name" value="ciao1"/>
    <property type="match status" value="1"/>
</dbReference>
<dbReference type="InterPro" id="IPR028608">
    <property type="entry name" value="CIAO1/Cia1"/>
</dbReference>
<dbReference type="InterPro" id="IPR020472">
    <property type="entry name" value="G-protein_beta_WD-40_rep"/>
</dbReference>
<dbReference type="InterPro" id="IPR015943">
    <property type="entry name" value="WD40/YVTN_repeat-like_dom_sf"/>
</dbReference>
<dbReference type="InterPro" id="IPR019775">
    <property type="entry name" value="WD40_repeat_CS"/>
</dbReference>
<dbReference type="InterPro" id="IPR036322">
    <property type="entry name" value="WD40_repeat_dom_sf"/>
</dbReference>
<dbReference type="InterPro" id="IPR001680">
    <property type="entry name" value="WD40_rpt"/>
</dbReference>
<dbReference type="PANTHER" id="PTHR19920:SF0">
    <property type="entry name" value="CYTOSOLIC IRON-SULFUR PROTEIN ASSEMBLY PROTEIN CIAO1-RELATED"/>
    <property type="match status" value="1"/>
</dbReference>
<dbReference type="PANTHER" id="PTHR19920">
    <property type="entry name" value="WD40 PROTEIN CIAO1"/>
    <property type="match status" value="1"/>
</dbReference>
<dbReference type="Pfam" id="PF00400">
    <property type="entry name" value="WD40"/>
    <property type="match status" value="6"/>
</dbReference>
<dbReference type="PRINTS" id="PR00320">
    <property type="entry name" value="GPROTEINBRPT"/>
</dbReference>
<dbReference type="SMART" id="SM00320">
    <property type="entry name" value="WD40"/>
    <property type="match status" value="7"/>
</dbReference>
<dbReference type="SUPFAM" id="SSF50978">
    <property type="entry name" value="WD40 repeat-like"/>
    <property type="match status" value="1"/>
</dbReference>
<dbReference type="PROSITE" id="PS00678">
    <property type="entry name" value="WD_REPEATS_1"/>
    <property type="match status" value="1"/>
</dbReference>
<dbReference type="PROSITE" id="PS50082">
    <property type="entry name" value="WD_REPEATS_2"/>
    <property type="match status" value="6"/>
</dbReference>
<dbReference type="PROSITE" id="PS50294">
    <property type="entry name" value="WD_REPEATS_REGION"/>
    <property type="match status" value="1"/>
</dbReference>
<keyword id="KW-0025">Alternative splicing</keyword>
<keyword id="KW-0963">Cytoplasm</keyword>
<keyword id="KW-0539">Nucleus</keyword>
<keyword id="KW-1185">Reference proteome</keyword>
<keyword id="KW-0677">Repeat</keyword>
<keyword id="KW-0853">WD repeat</keyword>
<proteinExistence type="evidence at protein level"/>
<evidence type="ECO:0000255" key="1"/>
<evidence type="ECO:0000269" key="2">
    <source>
    </source>
</evidence>
<evidence type="ECO:0000269" key="3">
    <source>
    </source>
</evidence>
<evidence type="ECO:0000303" key="4">
    <source>
    </source>
</evidence>
<evidence type="ECO:0000303" key="5">
    <source>
    </source>
</evidence>
<evidence type="ECO:0000305" key="6"/>
<evidence type="ECO:0000312" key="7">
    <source>
        <dbReference type="Araport" id="AT2G26060"/>
    </source>
</evidence>
<evidence type="ECO:0000312" key="8">
    <source>
        <dbReference type="EMBL" id="AAC31230.2"/>
    </source>
</evidence>
<evidence type="ECO:0000312" key="9">
    <source>
        <dbReference type="Proteomes" id="UP000006548"/>
    </source>
</evidence>